<name>STA5A_SHEEP</name>
<dbReference type="EMBL" id="X78428">
    <property type="protein sequence ID" value="CAA55191.1"/>
    <property type="molecule type" value="mRNA"/>
</dbReference>
<dbReference type="PIR" id="S55527">
    <property type="entry name" value="S55527"/>
</dbReference>
<dbReference type="RefSeq" id="NP_001009402.1">
    <property type="nucleotide sequence ID" value="NM_001009402.2"/>
</dbReference>
<dbReference type="SMR" id="P42231"/>
<dbReference type="STRING" id="9940.ENSOARP00000000859"/>
<dbReference type="iPTMnet" id="P42231"/>
<dbReference type="PaxDb" id="9940-ENSOARP00000000859"/>
<dbReference type="GeneID" id="443419"/>
<dbReference type="KEGG" id="oas:443419"/>
<dbReference type="CTD" id="6776"/>
<dbReference type="eggNOG" id="KOG3667">
    <property type="taxonomic scope" value="Eukaryota"/>
</dbReference>
<dbReference type="OrthoDB" id="19300at2759"/>
<dbReference type="Proteomes" id="UP000002356">
    <property type="component" value="Unplaced"/>
</dbReference>
<dbReference type="GO" id="GO:0005737">
    <property type="term" value="C:cytoplasm"/>
    <property type="evidence" value="ECO:0000250"/>
    <property type="project" value="AgBase"/>
</dbReference>
<dbReference type="GO" id="GO:0005829">
    <property type="term" value="C:cytosol"/>
    <property type="evidence" value="ECO:0007669"/>
    <property type="project" value="UniProtKB-ARBA"/>
</dbReference>
<dbReference type="GO" id="GO:0005634">
    <property type="term" value="C:nucleus"/>
    <property type="evidence" value="ECO:0000250"/>
    <property type="project" value="AgBase"/>
</dbReference>
<dbReference type="GO" id="GO:0003677">
    <property type="term" value="F:DNA binding"/>
    <property type="evidence" value="ECO:0000250"/>
    <property type="project" value="AgBase"/>
</dbReference>
<dbReference type="GO" id="GO:0000981">
    <property type="term" value="F:DNA-binding transcription factor activity, RNA polymerase II-specific"/>
    <property type="evidence" value="ECO:0000250"/>
    <property type="project" value="UniProtKB"/>
</dbReference>
<dbReference type="GO" id="GO:0007259">
    <property type="term" value="P:cell surface receptor signaling pathway via JAK-STAT"/>
    <property type="evidence" value="ECO:0000250"/>
    <property type="project" value="AgBase"/>
</dbReference>
<dbReference type="GO" id="GO:0019221">
    <property type="term" value="P:cytokine-mediated signaling pathway"/>
    <property type="evidence" value="ECO:0000250"/>
    <property type="project" value="AgBase"/>
</dbReference>
<dbReference type="GO" id="GO:0046543">
    <property type="term" value="P:development of secondary female sexual characteristics"/>
    <property type="evidence" value="ECO:0000250"/>
    <property type="project" value="AgBase"/>
</dbReference>
<dbReference type="GO" id="GO:0007565">
    <property type="term" value="P:female pregnancy"/>
    <property type="evidence" value="ECO:0000250"/>
    <property type="project" value="AgBase"/>
</dbReference>
<dbReference type="GO" id="GO:0007595">
    <property type="term" value="P:lactation"/>
    <property type="evidence" value="ECO:0000250"/>
    <property type="project" value="AgBase"/>
</dbReference>
<dbReference type="GO" id="GO:0019915">
    <property type="term" value="P:lipid storage"/>
    <property type="evidence" value="ECO:0000250"/>
    <property type="project" value="AgBase"/>
</dbReference>
<dbReference type="GO" id="GO:0001553">
    <property type="term" value="P:luteinization"/>
    <property type="evidence" value="ECO:0000250"/>
    <property type="project" value="AgBase"/>
</dbReference>
<dbReference type="GO" id="GO:0030879">
    <property type="term" value="P:mammary gland development"/>
    <property type="evidence" value="ECO:0000250"/>
    <property type="project" value="AgBase"/>
</dbReference>
<dbReference type="GO" id="GO:0001779">
    <property type="term" value="P:natural killer cell differentiation"/>
    <property type="evidence" value="ECO:0000250"/>
    <property type="project" value="AgBase"/>
</dbReference>
<dbReference type="GO" id="GO:0043066">
    <property type="term" value="P:negative regulation of apoptotic process"/>
    <property type="evidence" value="ECO:0000250"/>
    <property type="project" value="AgBase"/>
</dbReference>
<dbReference type="GO" id="GO:0045647">
    <property type="term" value="P:negative regulation of erythrocyte differentiation"/>
    <property type="evidence" value="ECO:0000250"/>
    <property type="project" value="AgBase"/>
</dbReference>
<dbReference type="GO" id="GO:0042104">
    <property type="term" value="P:positive regulation of activated T cell proliferation"/>
    <property type="evidence" value="ECO:0000250"/>
    <property type="project" value="AgBase"/>
</dbReference>
<dbReference type="GO" id="GO:0045579">
    <property type="term" value="P:positive regulation of B cell differentiation"/>
    <property type="evidence" value="ECO:0000250"/>
    <property type="project" value="AgBase"/>
</dbReference>
<dbReference type="GO" id="GO:0008284">
    <property type="term" value="P:positive regulation of cell population proliferation"/>
    <property type="evidence" value="ECO:0000250"/>
    <property type="project" value="AgBase"/>
</dbReference>
<dbReference type="GO" id="GO:0050729">
    <property type="term" value="P:positive regulation of inflammatory response"/>
    <property type="evidence" value="ECO:0000250"/>
    <property type="project" value="AgBase"/>
</dbReference>
<dbReference type="GO" id="GO:0032743">
    <property type="term" value="P:positive regulation of interleukin-2 production"/>
    <property type="evidence" value="ECO:0000250"/>
    <property type="project" value="AgBase"/>
</dbReference>
<dbReference type="GO" id="GO:0045931">
    <property type="term" value="P:positive regulation of mitotic cell cycle"/>
    <property type="evidence" value="ECO:0000250"/>
    <property type="project" value="AgBase"/>
</dbReference>
<dbReference type="GO" id="GO:0040018">
    <property type="term" value="P:positive regulation of multicellular organism growth"/>
    <property type="evidence" value="ECO:0000250"/>
    <property type="project" value="AgBase"/>
</dbReference>
<dbReference type="GO" id="GO:0045944">
    <property type="term" value="P:positive regulation of transcription by RNA polymerase II"/>
    <property type="evidence" value="ECO:0000250"/>
    <property type="project" value="AgBase"/>
</dbReference>
<dbReference type="GO" id="GO:0030155">
    <property type="term" value="P:regulation of cell adhesion"/>
    <property type="evidence" value="ECO:0000250"/>
    <property type="project" value="AgBase"/>
</dbReference>
<dbReference type="GO" id="GO:0030856">
    <property type="term" value="P:regulation of epithelial cell differentiation"/>
    <property type="evidence" value="ECO:0000250"/>
    <property type="project" value="AgBase"/>
</dbReference>
<dbReference type="GO" id="GO:0019218">
    <property type="term" value="P:regulation of steroid metabolic process"/>
    <property type="evidence" value="ECO:0000250"/>
    <property type="project" value="AgBase"/>
</dbReference>
<dbReference type="GO" id="GO:0043029">
    <property type="term" value="P:T cell homeostasis"/>
    <property type="evidence" value="ECO:0000250"/>
    <property type="project" value="AgBase"/>
</dbReference>
<dbReference type="CDD" id="cd16855">
    <property type="entry name" value="STAT5_CCD"/>
    <property type="match status" value="1"/>
</dbReference>
<dbReference type="CDD" id="cd16849">
    <property type="entry name" value="STAT5_DBD"/>
    <property type="match status" value="1"/>
</dbReference>
<dbReference type="FunFam" id="1.10.532.10:FF:000002">
    <property type="entry name" value="Signal transducer and activator of transcription"/>
    <property type="match status" value="1"/>
</dbReference>
<dbReference type="FunFam" id="1.20.1050.20:FF:000002">
    <property type="entry name" value="Signal transducer and activator of transcription"/>
    <property type="match status" value="1"/>
</dbReference>
<dbReference type="FunFam" id="2.60.40.630:FF:000002">
    <property type="entry name" value="Signal transducer and activator of transcription"/>
    <property type="match status" value="1"/>
</dbReference>
<dbReference type="FunFam" id="3.30.505.10:FF:000025">
    <property type="entry name" value="Signal transducer and activator of transcription"/>
    <property type="match status" value="1"/>
</dbReference>
<dbReference type="FunFam" id="1.10.238.10:FF:000029">
    <property type="entry name" value="Signal transducer and transcription activator 6"/>
    <property type="match status" value="1"/>
</dbReference>
<dbReference type="Gene3D" id="1.10.238.10">
    <property type="entry name" value="EF-hand"/>
    <property type="match status" value="1"/>
</dbReference>
<dbReference type="Gene3D" id="3.30.505.10">
    <property type="entry name" value="SH2 domain"/>
    <property type="match status" value="1"/>
</dbReference>
<dbReference type="Gene3D" id="1.20.1050.20">
    <property type="entry name" value="STAT transcription factor, all-alpha domain"/>
    <property type="match status" value="1"/>
</dbReference>
<dbReference type="Gene3D" id="2.60.40.630">
    <property type="entry name" value="STAT transcription factor, DNA-binding domain"/>
    <property type="match status" value="1"/>
</dbReference>
<dbReference type="Gene3D" id="1.10.532.10">
    <property type="entry name" value="STAT transcription factor, N-terminal domain"/>
    <property type="match status" value="1"/>
</dbReference>
<dbReference type="InterPro" id="IPR008967">
    <property type="entry name" value="p53-like_TF_DNA-bd_sf"/>
</dbReference>
<dbReference type="InterPro" id="IPR000980">
    <property type="entry name" value="SH2"/>
</dbReference>
<dbReference type="InterPro" id="IPR036860">
    <property type="entry name" value="SH2_dom_sf"/>
</dbReference>
<dbReference type="InterPro" id="IPR001217">
    <property type="entry name" value="STAT"/>
</dbReference>
<dbReference type="InterPro" id="IPR046994">
    <property type="entry name" value="STAT5_CCD"/>
</dbReference>
<dbReference type="InterPro" id="IPR035858">
    <property type="entry name" value="STAT5a/5b_DBD"/>
</dbReference>
<dbReference type="InterPro" id="IPR048988">
    <property type="entry name" value="STAT_linker"/>
</dbReference>
<dbReference type="InterPro" id="IPR036535">
    <property type="entry name" value="STAT_N_sf"/>
</dbReference>
<dbReference type="InterPro" id="IPR013800">
    <property type="entry name" value="STAT_TF_alpha"/>
</dbReference>
<dbReference type="InterPro" id="IPR015988">
    <property type="entry name" value="STAT_TF_coiled-coil"/>
</dbReference>
<dbReference type="InterPro" id="IPR013801">
    <property type="entry name" value="STAT_TF_DNA-bd"/>
</dbReference>
<dbReference type="InterPro" id="IPR012345">
    <property type="entry name" value="STAT_TF_DNA-bd_N"/>
</dbReference>
<dbReference type="InterPro" id="IPR013799">
    <property type="entry name" value="STAT_TF_prot_interaction"/>
</dbReference>
<dbReference type="PANTHER" id="PTHR11801">
    <property type="entry name" value="SIGNAL TRANSDUCER AND ACTIVATOR OF TRANSCRIPTION"/>
    <property type="match status" value="1"/>
</dbReference>
<dbReference type="Pfam" id="PF00017">
    <property type="entry name" value="SH2"/>
    <property type="match status" value="1"/>
</dbReference>
<dbReference type="Pfam" id="PF01017">
    <property type="entry name" value="STAT_alpha"/>
    <property type="match status" value="1"/>
</dbReference>
<dbReference type="Pfam" id="PF02864">
    <property type="entry name" value="STAT_bind"/>
    <property type="match status" value="1"/>
</dbReference>
<dbReference type="Pfam" id="PF02865">
    <property type="entry name" value="STAT_int"/>
    <property type="match status" value="1"/>
</dbReference>
<dbReference type="Pfam" id="PF21354">
    <property type="entry name" value="STAT_linker"/>
    <property type="match status" value="1"/>
</dbReference>
<dbReference type="SMART" id="SM00252">
    <property type="entry name" value="SH2"/>
    <property type="match status" value="1"/>
</dbReference>
<dbReference type="SMART" id="SM00964">
    <property type="entry name" value="STAT_int"/>
    <property type="match status" value="1"/>
</dbReference>
<dbReference type="SUPFAM" id="SSF49417">
    <property type="entry name" value="p53-like transcription factors"/>
    <property type="match status" value="1"/>
</dbReference>
<dbReference type="SUPFAM" id="SSF55550">
    <property type="entry name" value="SH2 domain"/>
    <property type="match status" value="1"/>
</dbReference>
<dbReference type="SUPFAM" id="SSF47655">
    <property type="entry name" value="STAT"/>
    <property type="match status" value="1"/>
</dbReference>
<dbReference type="SUPFAM" id="SSF48092">
    <property type="entry name" value="Transcription factor STAT-4 N-domain"/>
    <property type="match status" value="1"/>
</dbReference>
<dbReference type="PROSITE" id="PS50001">
    <property type="entry name" value="SH2"/>
    <property type="match status" value="1"/>
</dbReference>
<organism>
    <name type="scientific">Ovis aries</name>
    <name type="common">Sheep</name>
    <dbReference type="NCBI Taxonomy" id="9940"/>
    <lineage>
        <taxon>Eukaryota</taxon>
        <taxon>Metazoa</taxon>
        <taxon>Chordata</taxon>
        <taxon>Craniata</taxon>
        <taxon>Vertebrata</taxon>
        <taxon>Euteleostomi</taxon>
        <taxon>Mammalia</taxon>
        <taxon>Eutheria</taxon>
        <taxon>Laurasiatheria</taxon>
        <taxon>Artiodactyla</taxon>
        <taxon>Ruminantia</taxon>
        <taxon>Pecora</taxon>
        <taxon>Bovidae</taxon>
        <taxon>Caprinae</taxon>
        <taxon>Ovis</taxon>
    </lineage>
</organism>
<feature type="chain" id="PRO_0000182427" description="Signal transducer and activator of transcription 5A">
    <location>
        <begin position="1"/>
        <end position="794"/>
    </location>
</feature>
<feature type="domain" description="SH2" evidence="7">
    <location>
        <begin position="589"/>
        <end position="686"/>
    </location>
</feature>
<feature type="region of interest" description="Disordered" evidence="8">
    <location>
        <begin position="765"/>
        <end position="794"/>
    </location>
</feature>
<feature type="modified residue" description="Phosphotyrosine" evidence="3">
    <location>
        <position position="90"/>
    </location>
</feature>
<feature type="modified residue" description="Phosphoserine" evidence="3">
    <location>
        <position position="129"/>
    </location>
</feature>
<feature type="modified residue" description="Phosphotyrosine" evidence="3">
    <location>
        <position position="682"/>
    </location>
</feature>
<feature type="modified residue" description="Phosphotyrosine; by JAK2" evidence="5">
    <location>
        <position position="694"/>
    </location>
</feature>
<accession>P42231</accession>
<gene>
    <name type="primary">STAT5A</name>
    <name type="synonym">MGF</name>
    <name type="synonym">STAT5</name>
</gene>
<evidence type="ECO:0000250" key="1"/>
<evidence type="ECO:0000250" key="2">
    <source>
        <dbReference type="UniProtKB" id="P40763"/>
    </source>
</evidence>
<evidence type="ECO:0000250" key="3">
    <source>
        <dbReference type="UniProtKB" id="P42229"/>
    </source>
</evidence>
<evidence type="ECO:0000250" key="4">
    <source>
        <dbReference type="UniProtKB" id="P42230"/>
    </source>
</evidence>
<evidence type="ECO:0000250" key="5">
    <source>
        <dbReference type="UniProtKB" id="P51692"/>
    </source>
</evidence>
<evidence type="ECO:0000250" key="6">
    <source>
        <dbReference type="UniProtKB" id="Q62771"/>
    </source>
</evidence>
<evidence type="ECO:0000255" key="7">
    <source>
        <dbReference type="PROSITE-ProRule" id="PRU00191"/>
    </source>
</evidence>
<evidence type="ECO:0000256" key="8">
    <source>
        <dbReference type="SAM" id="MobiDB-lite"/>
    </source>
</evidence>
<evidence type="ECO:0000305" key="9"/>
<sequence>MAGWIQAQQLQGDALRQMQVLYGQHFPIEVRHYLAQWIESQPWDAIDLDNPQDRAQVTQLLEGLVQELQKKAEHQVGEDGFLLKIKLGHYVHVSSRTRTTAAPWSWLRCIRHILYNEQRLVREATNGNSSAGILVDAMSQKHLQINQTFEELRLVTQDTENELKKLQQTQEYFIIQYQESLRIQAQFAQLAQLNPQERLSRETALQQKQVSLEAWLQREAQTLQQYRVELAEKHQKTLQLLRKQQTIILDDELIQWKRRHDWRGMEAPPRSLDVLQSWCEKLAEIIWQNRQQIRRAEHLCQQLPIPGPVEEMLAEVNATITDIISALVTSTFIIEKQPPQVLKTQTKFAATVRLLVGGKLNVHMNPPQVKATIISEQQAKSLLKNENTRNECSGEILNNCCVMEYHQRTGTLSAHFRNMSLKRIKRADRRGAESVTEEKFTVLFESQFSVGSNELVFQVKTLSLPVVVIVHGSQDHNATATVLWDNAFAEPGRVPFAVPDKVLWPQLCEALNMKFKAEVQSNRGLTKENLLFLAQKLFNNSSSHLEDYNGMSVSWSQFNRENLPGWNYTFWQWFDGVMEVLKKHHKPHWNDGAILGFVNKQQAHDLLINKPDGTFLLRFSDSEIGGITIAWKFDSPDRNLWNLKPFTTREGSIRSLADRLGDLNYLIYVFPDRPKDEVFSKYYTPVLAKAVDGYVKPQIKQVVPEFVSASADSAGSSATYMDQAPSPAVCPQPHYNMYPQNPDPVLDQDGEFDLDETMDVARHVEELLRRPNGQSGPLSPPPAGLFTPARGSLS</sequence>
<reference key="1">
    <citation type="journal article" date="1994" name="EMBO J.">
        <title>Mammary gland factor (MGF) is a novel member of the cytokine regulated transcription factor gene family and confers the prolactin response.</title>
        <authorList>
            <person name="Wakao H."/>
            <person name="Gouilleux F."/>
            <person name="Groner B."/>
        </authorList>
    </citation>
    <scope>NUCLEOTIDE SEQUENCE [MRNA]</scope>
    <source>
        <tissue>Mammary gland</tissue>
    </source>
</reference>
<reference key="2">
    <citation type="journal article" date="1995" name="EMBO J.">
        <authorList>
            <person name="Wakao H."/>
            <person name="Gouilleux F."/>
            <person name="Groner B."/>
        </authorList>
    </citation>
    <scope>ERRATUM OF PUBMED:7514531</scope>
    <scope>SEQUENCE REVISION</scope>
</reference>
<reference key="3">
    <citation type="journal article" date="1995" name="EMBO J.">
        <title>Interleukin-3 signals through multiple isoforms of Stat5.</title>
        <authorList>
            <person name="Azam M."/>
            <person name="Erdjument-Bromage H."/>
            <person name="Kreider B.L."/>
            <person name="Xia M."/>
            <person name="Quelle F."/>
            <person name="Basu R."/>
            <person name="Saris C."/>
            <person name="Tempst P."/>
            <person name="Ihle J.N."/>
            <person name="Schindler C."/>
        </authorList>
    </citation>
    <scope>PARTIAL PROTEIN SEQUENCE</scope>
    <source>
        <tissue>Mammary gland</tissue>
    </source>
</reference>
<keyword id="KW-0010">Activator</keyword>
<keyword id="KW-0963">Cytoplasm</keyword>
<keyword id="KW-0903">Direct protein sequencing</keyword>
<keyword id="KW-0238">DNA-binding</keyword>
<keyword id="KW-0421">Lactation</keyword>
<keyword id="KW-0539">Nucleus</keyword>
<keyword id="KW-0597">Phosphoprotein</keyword>
<keyword id="KW-1185">Reference proteome</keyword>
<keyword id="KW-0727">SH2 domain</keyword>
<keyword id="KW-0804">Transcription</keyword>
<keyword id="KW-0805">Transcription regulation</keyword>
<keyword id="KW-0832">Ubl conjugation</keyword>
<protein>
    <recommendedName>
        <fullName>Signal transducer and activator of transcription 5A</fullName>
    </recommendedName>
    <alternativeName>
        <fullName>Mammary gland factor</fullName>
    </alternativeName>
</protein>
<proteinExistence type="evidence at protein level"/>
<comment type="function">
    <text>Carries out a dual function: signal transduction and activation of transcription. Mediates cellular responses to the cytokine KITLG/SCF and other growth factors. May mediate cellular responses to activated FGFR1, FGFR2, FGFR3 and FGFR4. Binds to the GAS element and activates PRL-induced transcription. Regulates the expression of milk proteins during lactation.</text>
</comment>
<comment type="subunit">
    <text evidence="1 3">Forms a homodimer or a heterodimer with a related family member. Binds NR3C1. Interacts with NCOA1 and SOCS7. Interacts with ERBB4 (By similarity). Interacts with EBF4. Interacts with CD69 (By similarity).</text>
</comment>
<comment type="subcellular location">
    <subcellularLocation>
        <location>Cytoplasm</location>
    </subcellularLocation>
    <subcellularLocation>
        <location>Nucleus</location>
    </subcellularLocation>
    <text>Translocated into the nucleus in response to phosphorylation.</text>
</comment>
<comment type="tissue specificity">
    <text>Found in mammary gland and, in lesser extent, in ovary, thymus, spleen, kidney, lung, muscle and adrenal gland.</text>
</comment>
<comment type="induction">
    <text>By prolactin.</text>
</comment>
<comment type="PTM">
    <text evidence="4">ISGylated.</text>
</comment>
<comment type="PTM">
    <text evidence="2 3 4 6">Tyrosine phosphorylated in response to KITLG/SCF, IL2, IL3, IL7, IL15, CSF2/GMCSF, GH1, PRL, EPO and THPO (By similarity). Activated KIT promotes phosphorylation on tyrosine residues and subsequent translocation to the nucleus (By similarity). Tyrosine phosphorylated in response to constitutively activated FGFR1, FGFR2, FGFR3 and FGFR4 (By similarity). Tyrosine phosphorylation is required for DNA-binding activity and dimerization. Serine phosphorylation is also required for maximal transcriptional activity (By similarity). Tyrosine phosphorylated in response to signaling via activated FLT3; wild-type FLT3 results in much weaker phosphorylation than constitutively activated mutant FLT3. Alternatively, can be phosphorylated by JAK2 at Tyr-694 (By similarity).</text>
</comment>
<comment type="similarity">
    <text evidence="9">Belongs to the transcription factor STAT family.</text>
</comment>